<comment type="function">
    <text evidence="1">Catalyzes the conversion of 4-hydroxy-tetrahydrodipicolinate (HTPA) to tetrahydrodipicolinate.</text>
</comment>
<comment type="catalytic activity">
    <reaction evidence="1">
        <text>(S)-2,3,4,5-tetrahydrodipicolinate + NAD(+) + H2O = (2S,4S)-4-hydroxy-2,3,4,5-tetrahydrodipicolinate + NADH + H(+)</text>
        <dbReference type="Rhea" id="RHEA:35323"/>
        <dbReference type="ChEBI" id="CHEBI:15377"/>
        <dbReference type="ChEBI" id="CHEBI:15378"/>
        <dbReference type="ChEBI" id="CHEBI:16845"/>
        <dbReference type="ChEBI" id="CHEBI:57540"/>
        <dbReference type="ChEBI" id="CHEBI:57945"/>
        <dbReference type="ChEBI" id="CHEBI:67139"/>
        <dbReference type="EC" id="1.17.1.8"/>
    </reaction>
</comment>
<comment type="catalytic activity">
    <reaction evidence="1">
        <text>(S)-2,3,4,5-tetrahydrodipicolinate + NADP(+) + H2O = (2S,4S)-4-hydroxy-2,3,4,5-tetrahydrodipicolinate + NADPH + H(+)</text>
        <dbReference type="Rhea" id="RHEA:35331"/>
        <dbReference type="ChEBI" id="CHEBI:15377"/>
        <dbReference type="ChEBI" id="CHEBI:15378"/>
        <dbReference type="ChEBI" id="CHEBI:16845"/>
        <dbReference type="ChEBI" id="CHEBI:57783"/>
        <dbReference type="ChEBI" id="CHEBI:58349"/>
        <dbReference type="ChEBI" id="CHEBI:67139"/>
        <dbReference type="EC" id="1.17.1.8"/>
    </reaction>
</comment>
<comment type="pathway">
    <text evidence="1">Amino-acid biosynthesis; L-lysine biosynthesis via DAP pathway; (S)-tetrahydrodipicolinate from L-aspartate: step 4/4.</text>
</comment>
<comment type="subcellular location">
    <subcellularLocation>
        <location evidence="1">Cytoplasm</location>
    </subcellularLocation>
</comment>
<comment type="similarity">
    <text evidence="1">Belongs to the DapB family.</text>
</comment>
<comment type="caution">
    <text evidence="2">Was originally thought to be a dihydrodipicolinate reductase (DHDPR), catalyzing the conversion of dihydrodipicolinate to tetrahydrodipicolinate. However, it was shown in E.coli that the substrate of the enzymatic reaction is not dihydrodipicolinate (DHDP) but in fact (2S,4S)-4-hydroxy-2,3,4,5-tetrahydrodipicolinic acid (HTPA), the product released by the DapA-catalyzed reaction.</text>
</comment>
<protein>
    <recommendedName>
        <fullName evidence="1">4-hydroxy-tetrahydrodipicolinate reductase</fullName>
        <shortName evidence="1">HTPA reductase</shortName>
        <ecNumber evidence="1">1.17.1.8</ecNumber>
    </recommendedName>
</protein>
<keyword id="KW-0028">Amino-acid biosynthesis</keyword>
<keyword id="KW-0963">Cytoplasm</keyword>
<keyword id="KW-0220">Diaminopimelate biosynthesis</keyword>
<keyword id="KW-0457">Lysine biosynthesis</keyword>
<keyword id="KW-0520">NAD</keyword>
<keyword id="KW-0521">NADP</keyword>
<keyword id="KW-0560">Oxidoreductase</keyword>
<name>DAPB_LISW6</name>
<reference key="1">
    <citation type="journal article" date="2006" name="J. Bacteriol.">
        <title>Whole-genome sequence of Listeria welshimeri reveals common steps in genome reduction with Listeria innocua as compared to Listeria monocytogenes.</title>
        <authorList>
            <person name="Hain T."/>
            <person name="Steinweg C."/>
            <person name="Kuenne C.T."/>
            <person name="Billion A."/>
            <person name="Ghai R."/>
            <person name="Chatterjee S.S."/>
            <person name="Domann E."/>
            <person name="Kaerst U."/>
            <person name="Goesmann A."/>
            <person name="Bekel T."/>
            <person name="Bartels D."/>
            <person name="Kaiser O."/>
            <person name="Meyer F."/>
            <person name="Puehler A."/>
            <person name="Weisshaar B."/>
            <person name="Wehland J."/>
            <person name="Liang C."/>
            <person name="Dandekar T."/>
            <person name="Lampidis R."/>
            <person name="Kreft J."/>
            <person name="Goebel W."/>
            <person name="Chakraborty T."/>
        </authorList>
    </citation>
    <scope>NUCLEOTIDE SEQUENCE [LARGE SCALE GENOMIC DNA]</scope>
    <source>
        <strain>ATCC 35897 / DSM 20650 / CCUG 15529 / CIP 8149 / NCTC 11857 / SLCC 5334 / V8</strain>
    </source>
</reference>
<gene>
    <name evidence="1" type="primary">dapB</name>
    <name type="ordered locus">lwe1926</name>
</gene>
<accession>A0AK12</accession>
<proteinExistence type="inferred from homology"/>
<organism>
    <name type="scientific">Listeria welshimeri serovar 6b (strain ATCC 35897 / DSM 20650 / CCUG 15529 / CIP 8149 / NCTC 11857 / SLCC 5334 / V8)</name>
    <dbReference type="NCBI Taxonomy" id="386043"/>
    <lineage>
        <taxon>Bacteria</taxon>
        <taxon>Bacillati</taxon>
        <taxon>Bacillota</taxon>
        <taxon>Bacilli</taxon>
        <taxon>Bacillales</taxon>
        <taxon>Listeriaceae</taxon>
        <taxon>Listeria</taxon>
    </lineage>
</organism>
<feature type="chain" id="PRO_1000008582" description="4-hydroxy-tetrahydrodipicolinate reductase">
    <location>
        <begin position="1"/>
        <end position="263"/>
    </location>
</feature>
<feature type="active site" description="Proton donor/acceptor" evidence="1">
    <location>
        <position position="152"/>
    </location>
</feature>
<feature type="active site" description="Proton donor" evidence="1">
    <location>
        <position position="156"/>
    </location>
</feature>
<feature type="binding site" evidence="1">
    <location>
        <begin position="7"/>
        <end position="12"/>
    </location>
    <ligand>
        <name>NAD(+)</name>
        <dbReference type="ChEBI" id="CHEBI:57540"/>
    </ligand>
</feature>
<feature type="binding site" evidence="1">
    <location>
        <begin position="96"/>
        <end position="98"/>
    </location>
    <ligand>
        <name>NAD(+)</name>
        <dbReference type="ChEBI" id="CHEBI:57540"/>
    </ligand>
</feature>
<feature type="binding site" evidence="1">
    <location>
        <begin position="122"/>
        <end position="125"/>
    </location>
    <ligand>
        <name>NAD(+)</name>
        <dbReference type="ChEBI" id="CHEBI:57540"/>
    </ligand>
</feature>
<feature type="binding site" evidence="1">
    <location>
        <position position="153"/>
    </location>
    <ligand>
        <name>(S)-2,3,4,5-tetrahydrodipicolinate</name>
        <dbReference type="ChEBI" id="CHEBI:16845"/>
    </ligand>
</feature>
<feature type="binding site" evidence="1">
    <location>
        <begin position="162"/>
        <end position="163"/>
    </location>
    <ligand>
        <name>(S)-2,3,4,5-tetrahydrodipicolinate</name>
        <dbReference type="ChEBI" id="CHEBI:16845"/>
    </ligand>
</feature>
<sequence>MKVAVSGFKGRMGHEVVKTVLREEDLELVAVLDHEPKEKNIREIVEFSSLDVPVYANLSEMLEEAKPDCVVDFTTPKVGYSNTKTILEHGVRAVVGTTGFTPEQIESLREIAETKKIGALIAPNFAVGAVLMMQFAQKAAKYFPNVEIIELHHDNKLDAPSGTAVKTAEMMAENRTFVKQGAEDEVELMEGARGAEYEGMRIHSVRLPGLVAHQEVIFGAEGQGLTIRHDSYDRISFMSGVALSIRKTKELETLIYGLENILD</sequence>
<evidence type="ECO:0000255" key="1">
    <source>
        <dbReference type="HAMAP-Rule" id="MF_00102"/>
    </source>
</evidence>
<evidence type="ECO:0000305" key="2"/>
<dbReference type="EC" id="1.17.1.8" evidence="1"/>
<dbReference type="EMBL" id="AM263198">
    <property type="protein sequence ID" value="CAK21344.1"/>
    <property type="molecule type" value="Genomic_DNA"/>
</dbReference>
<dbReference type="RefSeq" id="WP_011702692.1">
    <property type="nucleotide sequence ID" value="NC_008555.1"/>
</dbReference>
<dbReference type="SMR" id="A0AK12"/>
<dbReference type="STRING" id="386043.lwe1926"/>
<dbReference type="GeneID" id="61189828"/>
<dbReference type="KEGG" id="lwe:lwe1926"/>
<dbReference type="eggNOG" id="COG0289">
    <property type="taxonomic scope" value="Bacteria"/>
</dbReference>
<dbReference type="HOGENOM" id="CLU_047479_0_1_9"/>
<dbReference type="OrthoDB" id="9790352at2"/>
<dbReference type="UniPathway" id="UPA00034">
    <property type="reaction ID" value="UER00018"/>
</dbReference>
<dbReference type="Proteomes" id="UP000000779">
    <property type="component" value="Chromosome"/>
</dbReference>
<dbReference type="GO" id="GO:0005829">
    <property type="term" value="C:cytosol"/>
    <property type="evidence" value="ECO:0007669"/>
    <property type="project" value="TreeGrafter"/>
</dbReference>
<dbReference type="GO" id="GO:0008839">
    <property type="term" value="F:4-hydroxy-tetrahydrodipicolinate reductase"/>
    <property type="evidence" value="ECO:0007669"/>
    <property type="project" value="UniProtKB-EC"/>
</dbReference>
<dbReference type="GO" id="GO:0051287">
    <property type="term" value="F:NAD binding"/>
    <property type="evidence" value="ECO:0007669"/>
    <property type="project" value="UniProtKB-UniRule"/>
</dbReference>
<dbReference type="GO" id="GO:0050661">
    <property type="term" value="F:NADP binding"/>
    <property type="evidence" value="ECO:0007669"/>
    <property type="project" value="UniProtKB-UniRule"/>
</dbReference>
<dbReference type="GO" id="GO:0016726">
    <property type="term" value="F:oxidoreductase activity, acting on CH or CH2 groups, NAD or NADP as acceptor"/>
    <property type="evidence" value="ECO:0007669"/>
    <property type="project" value="UniProtKB-UniRule"/>
</dbReference>
<dbReference type="GO" id="GO:0019877">
    <property type="term" value="P:diaminopimelate biosynthetic process"/>
    <property type="evidence" value="ECO:0007669"/>
    <property type="project" value="UniProtKB-UniRule"/>
</dbReference>
<dbReference type="GO" id="GO:0009089">
    <property type="term" value="P:lysine biosynthetic process via diaminopimelate"/>
    <property type="evidence" value="ECO:0007669"/>
    <property type="project" value="UniProtKB-UniRule"/>
</dbReference>
<dbReference type="CDD" id="cd02274">
    <property type="entry name" value="DHDPR_N"/>
    <property type="match status" value="1"/>
</dbReference>
<dbReference type="FunFam" id="3.30.360.10:FF:000009">
    <property type="entry name" value="4-hydroxy-tetrahydrodipicolinate reductase"/>
    <property type="match status" value="1"/>
</dbReference>
<dbReference type="Gene3D" id="3.30.360.10">
    <property type="entry name" value="Dihydrodipicolinate Reductase, domain 2"/>
    <property type="match status" value="1"/>
</dbReference>
<dbReference type="Gene3D" id="3.40.50.720">
    <property type="entry name" value="NAD(P)-binding Rossmann-like Domain"/>
    <property type="match status" value="1"/>
</dbReference>
<dbReference type="HAMAP" id="MF_00102">
    <property type="entry name" value="DapB"/>
    <property type="match status" value="1"/>
</dbReference>
<dbReference type="InterPro" id="IPR022663">
    <property type="entry name" value="DapB_C"/>
</dbReference>
<dbReference type="InterPro" id="IPR000846">
    <property type="entry name" value="DapB_N"/>
</dbReference>
<dbReference type="InterPro" id="IPR022664">
    <property type="entry name" value="DapB_N_CS"/>
</dbReference>
<dbReference type="InterPro" id="IPR023940">
    <property type="entry name" value="DHDPR_bac"/>
</dbReference>
<dbReference type="InterPro" id="IPR036291">
    <property type="entry name" value="NAD(P)-bd_dom_sf"/>
</dbReference>
<dbReference type="NCBIfam" id="TIGR00036">
    <property type="entry name" value="dapB"/>
    <property type="match status" value="1"/>
</dbReference>
<dbReference type="PANTHER" id="PTHR20836:SF0">
    <property type="entry name" value="4-HYDROXY-TETRAHYDRODIPICOLINATE REDUCTASE 1, CHLOROPLASTIC-RELATED"/>
    <property type="match status" value="1"/>
</dbReference>
<dbReference type="PANTHER" id="PTHR20836">
    <property type="entry name" value="DIHYDRODIPICOLINATE REDUCTASE"/>
    <property type="match status" value="1"/>
</dbReference>
<dbReference type="Pfam" id="PF05173">
    <property type="entry name" value="DapB_C"/>
    <property type="match status" value="1"/>
</dbReference>
<dbReference type="Pfam" id="PF01113">
    <property type="entry name" value="DapB_N"/>
    <property type="match status" value="1"/>
</dbReference>
<dbReference type="PIRSF" id="PIRSF000161">
    <property type="entry name" value="DHPR"/>
    <property type="match status" value="1"/>
</dbReference>
<dbReference type="SUPFAM" id="SSF55347">
    <property type="entry name" value="Glyceraldehyde-3-phosphate dehydrogenase-like, C-terminal domain"/>
    <property type="match status" value="1"/>
</dbReference>
<dbReference type="SUPFAM" id="SSF51735">
    <property type="entry name" value="NAD(P)-binding Rossmann-fold domains"/>
    <property type="match status" value="1"/>
</dbReference>
<dbReference type="PROSITE" id="PS01298">
    <property type="entry name" value="DAPB"/>
    <property type="match status" value="1"/>
</dbReference>